<organism>
    <name type="scientific">Brucella canis (strain ATCC 23365 / NCTC 10854 / RM-666)</name>
    <dbReference type="NCBI Taxonomy" id="483179"/>
    <lineage>
        <taxon>Bacteria</taxon>
        <taxon>Pseudomonadati</taxon>
        <taxon>Pseudomonadota</taxon>
        <taxon>Alphaproteobacteria</taxon>
        <taxon>Hyphomicrobiales</taxon>
        <taxon>Brucellaceae</taxon>
        <taxon>Brucella/Ochrobactrum group</taxon>
        <taxon>Brucella</taxon>
    </lineage>
</organism>
<protein>
    <recommendedName>
        <fullName evidence="1">Putative pyruvate, phosphate dikinase regulatory protein</fullName>
        <shortName evidence="1">PPDK regulatory protein</shortName>
        <ecNumber evidence="1">2.7.11.32</ecNumber>
        <ecNumber evidence="1">2.7.4.27</ecNumber>
    </recommendedName>
</protein>
<dbReference type="EC" id="2.7.11.32" evidence="1"/>
<dbReference type="EC" id="2.7.4.27" evidence="1"/>
<dbReference type="EMBL" id="CP000872">
    <property type="protein sequence ID" value="ABX63097.1"/>
    <property type="molecule type" value="Genomic_DNA"/>
</dbReference>
<dbReference type="RefSeq" id="WP_002965131.1">
    <property type="nucleotide sequence ID" value="NC_010103.1"/>
</dbReference>
<dbReference type="SMR" id="A9M9F0"/>
<dbReference type="KEGG" id="bcs:BCAN_A2113"/>
<dbReference type="HOGENOM" id="CLU_046206_2_0_5"/>
<dbReference type="PhylomeDB" id="A9M9F0"/>
<dbReference type="Proteomes" id="UP000001385">
    <property type="component" value="Chromosome I"/>
</dbReference>
<dbReference type="GO" id="GO:0043531">
    <property type="term" value="F:ADP binding"/>
    <property type="evidence" value="ECO:0007669"/>
    <property type="project" value="UniProtKB-UniRule"/>
</dbReference>
<dbReference type="GO" id="GO:0005524">
    <property type="term" value="F:ATP binding"/>
    <property type="evidence" value="ECO:0007669"/>
    <property type="project" value="InterPro"/>
</dbReference>
<dbReference type="GO" id="GO:0016776">
    <property type="term" value="F:phosphotransferase activity, phosphate group as acceptor"/>
    <property type="evidence" value="ECO:0007669"/>
    <property type="project" value="UniProtKB-UniRule"/>
</dbReference>
<dbReference type="GO" id="GO:0004674">
    <property type="term" value="F:protein serine/threonine kinase activity"/>
    <property type="evidence" value="ECO:0007669"/>
    <property type="project" value="UniProtKB-UniRule"/>
</dbReference>
<dbReference type="HAMAP" id="MF_00921">
    <property type="entry name" value="PDRP"/>
    <property type="match status" value="1"/>
</dbReference>
<dbReference type="InterPro" id="IPR005177">
    <property type="entry name" value="Kinase-pyrophosphorylase"/>
</dbReference>
<dbReference type="InterPro" id="IPR026565">
    <property type="entry name" value="PPDK_reg"/>
</dbReference>
<dbReference type="NCBIfam" id="NF003742">
    <property type="entry name" value="PRK05339.1"/>
    <property type="match status" value="1"/>
</dbReference>
<dbReference type="PANTHER" id="PTHR31756">
    <property type="entry name" value="PYRUVATE, PHOSPHATE DIKINASE REGULATORY PROTEIN 1, CHLOROPLASTIC"/>
    <property type="match status" value="1"/>
</dbReference>
<dbReference type="PANTHER" id="PTHR31756:SF3">
    <property type="entry name" value="PYRUVATE, PHOSPHATE DIKINASE REGULATORY PROTEIN 1, CHLOROPLASTIC"/>
    <property type="match status" value="1"/>
</dbReference>
<dbReference type="Pfam" id="PF03618">
    <property type="entry name" value="Kinase-PPPase"/>
    <property type="match status" value="1"/>
</dbReference>
<keyword id="KW-0418">Kinase</keyword>
<keyword id="KW-0547">Nucleotide-binding</keyword>
<keyword id="KW-1185">Reference proteome</keyword>
<keyword id="KW-0723">Serine/threonine-protein kinase</keyword>
<keyword id="KW-0808">Transferase</keyword>
<comment type="function">
    <text evidence="1">Bifunctional serine/threonine kinase and phosphorylase involved in the regulation of the pyruvate, phosphate dikinase (PPDK) by catalyzing its phosphorylation/dephosphorylation.</text>
</comment>
<comment type="catalytic activity">
    <reaction evidence="1">
        <text>N(tele)-phospho-L-histidyl/L-threonyl-[pyruvate, phosphate dikinase] + ADP = N(tele)-phospho-L-histidyl/O-phospho-L-threonyl-[pyruvate, phosphate dikinase] + AMP + H(+)</text>
        <dbReference type="Rhea" id="RHEA:43692"/>
        <dbReference type="Rhea" id="RHEA-COMP:10650"/>
        <dbReference type="Rhea" id="RHEA-COMP:10651"/>
        <dbReference type="ChEBI" id="CHEBI:15378"/>
        <dbReference type="ChEBI" id="CHEBI:30013"/>
        <dbReference type="ChEBI" id="CHEBI:61977"/>
        <dbReference type="ChEBI" id="CHEBI:83586"/>
        <dbReference type="ChEBI" id="CHEBI:456215"/>
        <dbReference type="ChEBI" id="CHEBI:456216"/>
        <dbReference type="EC" id="2.7.11.32"/>
    </reaction>
</comment>
<comment type="catalytic activity">
    <reaction evidence="1">
        <text>N(tele)-phospho-L-histidyl/O-phospho-L-threonyl-[pyruvate, phosphate dikinase] + phosphate + H(+) = N(tele)-phospho-L-histidyl/L-threonyl-[pyruvate, phosphate dikinase] + diphosphate</text>
        <dbReference type="Rhea" id="RHEA:43696"/>
        <dbReference type="Rhea" id="RHEA-COMP:10650"/>
        <dbReference type="Rhea" id="RHEA-COMP:10651"/>
        <dbReference type="ChEBI" id="CHEBI:15378"/>
        <dbReference type="ChEBI" id="CHEBI:30013"/>
        <dbReference type="ChEBI" id="CHEBI:33019"/>
        <dbReference type="ChEBI" id="CHEBI:43474"/>
        <dbReference type="ChEBI" id="CHEBI:61977"/>
        <dbReference type="ChEBI" id="CHEBI:83586"/>
        <dbReference type="EC" id="2.7.4.27"/>
    </reaction>
</comment>
<comment type="similarity">
    <text evidence="1">Belongs to the pyruvate, phosphate/water dikinase regulatory protein family. PDRP subfamily.</text>
</comment>
<sequence length="279" mass="30481">MTRPLSYFHLHLISDATGETLLAAGRAAAAQYANARAIEHIYPLIRTEKQLRKVLEGIDAEPGIVLYTVVDQKLAAIIDESCADMGVPSVSVLEPVLNTFQSYLGAPAHRRASAQHVLNADYFRRIDALNFMMEHDDGQLPLDIEEADVIIVGISRTSKTPTSIYLANRGIKAANVPLVLGIPVPEILFAAKRPLIVGLVATAERISQIRQNRPLGNIPSLDTGLYTDRVSISEELAYARNLCNRHGWPIIDVSRRSIEETAAAILALLRNGKKEGSSS</sequence>
<gene>
    <name type="ordered locus">BCAN_A2113</name>
</gene>
<accession>A9M9F0</accession>
<reference key="1">
    <citation type="submission" date="2007-10" db="EMBL/GenBank/DDBJ databases">
        <title>Brucella canis ATCC 23365 whole genome shotgun sequencing project.</title>
        <authorList>
            <person name="Setubal J.C."/>
            <person name="Bowns C."/>
            <person name="Boyle S."/>
            <person name="Crasta O.R."/>
            <person name="Czar M.J."/>
            <person name="Dharmanolla C."/>
            <person name="Gillespie J.J."/>
            <person name="Kenyon R.W."/>
            <person name="Lu J."/>
            <person name="Mane S."/>
            <person name="Mohapatra S."/>
            <person name="Nagrani S."/>
            <person name="Purkayastha A."/>
            <person name="Rajasimha H.K."/>
            <person name="Shallom J.M."/>
            <person name="Shallom S."/>
            <person name="Shukla M."/>
            <person name="Snyder E.E."/>
            <person name="Sobral B.W."/>
            <person name="Wattam A.R."/>
            <person name="Will R."/>
            <person name="Williams K."/>
            <person name="Yoo H."/>
            <person name="Bruce D."/>
            <person name="Detter C."/>
            <person name="Munk C."/>
            <person name="Brettin T.S."/>
        </authorList>
    </citation>
    <scope>NUCLEOTIDE SEQUENCE [LARGE SCALE GENOMIC DNA]</scope>
    <source>
        <strain>ATCC 23365 / NCTC 10854 / RM-666</strain>
    </source>
</reference>
<name>PDRP_BRUC2</name>
<evidence type="ECO:0000255" key="1">
    <source>
        <dbReference type="HAMAP-Rule" id="MF_00921"/>
    </source>
</evidence>
<proteinExistence type="inferred from homology"/>
<feature type="chain" id="PRO_1000084464" description="Putative pyruvate, phosphate dikinase regulatory protein">
    <location>
        <begin position="1"/>
        <end position="279"/>
    </location>
</feature>
<feature type="binding site" evidence="1">
    <location>
        <begin position="153"/>
        <end position="160"/>
    </location>
    <ligand>
        <name>ADP</name>
        <dbReference type="ChEBI" id="CHEBI:456216"/>
    </ligand>
</feature>